<accession>Q8YLJ7</accession>
<evidence type="ECO:0000255" key="1">
    <source>
        <dbReference type="HAMAP-Rule" id="MF_01318"/>
    </source>
</evidence>
<evidence type="ECO:0000305" key="2"/>
<comment type="function">
    <text evidence="1">Binds directly to 23S rRNA. The L1 stalk is quite mobile in the ribosome, and is involved in E site tRNA release.</text>
</comment>
<comment type="function">
    <text evidence="1">Protein L1 is also a translational repressor protein, it controls the translation of the L11 operon by binding to its mRNA.</text>
</comment>
<comment type="subunit">
    <text evidence="1">Part of the 50S ribosomal subunit.</text>
</comment>
<comment type="similarity">
    <text evidence="1">Belongs to the universal ribosomal protein uL1 family.</text>
</comment>
<gene>
    <name evidence="1" type="primary">rplA</name>
    <name evidence="1" type="synonym">rpl1</name>
    <name type="ordered locus">alr5301</name>
</gene>
<sequence>MTKKVSRRLRELQAKVEDREYGPLDALGLLKETATAKFGEAAEAHIRLGIDPKYTDQQLRTTVALPKGTGQIVRVAVIARGEKVTEASNAGADVVGSEELIDEIQKGRMDFDKLIATPDVMPQVAKLGKMLGPRGLMPSPKGGTVTFDVASAIAEFKAGKLEFRADRTGIVHVMFGKASFSPEDLLVNLKALQETIDRNRPSGAKGRYWRTFYVSATMGPSIRVDINALRDYKLTEAA</sequence>
<protein>
    <recommendedName>
        <fullName evidence="1">Large ribosomal subunit protein uL1</fullName>
    </recommendedName>
    <alternativeName>
        <fullName evidence="2">50S ribosomal protein L1</fullName>
    </alternativeName>
</protein>
<reference key="1">
    <citation type="journal article" date="2001" name="DNA Res.">
        <title>Complete genomic sequence of the filamentous nitrogen-fixing cyanobacterium Anabaena sp. strain PCC 7120.</title>
        <authorList>
            <person name="Kaneko T."/>
            <person name="Nakamura Y."/>
            <person name="Wolk C.P."/>
            <person name="Kuritz T."/>
            <person name="Sasamoto S."/>
            <person name="Watanabe A."/>
            <person name="Iriguchi M."/>
            <person name="Ishikawa A."/>
            <person name="Kawashima K."/>
            <person name="Kimura T."/>
            <person name="Kishida Y."/>
            <person name="Kohara M."/>
            <person name="Matsumoto M."/>
            <person name="Matsuno A."/>
            <person name="Muraki A."/>
            <person name="Nakazaki N."/>
            <person name="Shimpo S."/>
            <person name="Sugimoto M."/>
            <person name="Takazawa M."/>
            <person name="Yamada M."/>
            <person name="Yasuda M."/>
            <person name="Tabata S."/>
        </authorList>
    </citation>
    <scope>NUCLEOTIDE SEQUENCE [LARGE SCALE GENOMIC DNA]</scope>
    <source>
        <strain>PCC 7120 / SAG 25.82 / UTEX 2576</strain>
    </source>
</reference>
<name>RL1_NOSS1</name>
<proteinExistence type="inferred from homology"/>
<keyword id="KW-1185">Reference proteome</keyword>
<keyword id="KW-0678">Repressor</keyword>
<keyword id="KW-0687">Ribonucleoprotein</keyword>
<keyword id="KW-0689">Ribosomal protein</keyword>
<keyword id="KW-0694">RNA-binding</keyword>
<keyword id="KW-0699">rRNA-binding</keyword>
<keyword id="KW-0810">Translation regulation</keyword>
<keyword id="KW-0820">tRNA-binding</keyword>
<feature type="chain" id="PRO_0000125604" description="Large ribosomal subunit protein uL1">
    <location>
        <begin position="1"/>
        <end position="238"/>
    </location>
</feature>
<organism>
    <name type="scientific">Nostoc sp. (strain PCC 7120 / SAG 25.82 / UTEX 2576)</name>
    <dbReference type="NCBI Taxonomy" id="103690"/>
    <lineage>
        <taxon>Bacteria</taxon>
        <taxon>Bacillati</taxon>
        <taxon>Cyanobacteriota</taxon>
        <taxon>Cyanophyceae</taxon>
        <taxon>Nostocales</taxon>
        <taxon>Nostocaceae</taxon>
        <taxon>Nostoc</taxon>
    </lineage>
</organism>
<dbReference type="EMBL" id="BA000019">
    <property type="protein sequence ID" value="BAB77000.1"/>
    <property type="molecule type" value="Genomic_DNA"/>
</dbReference>
<dbReference type="PIR" id="AE2468">
    <property type="entry name" value="AE2468"/>
</dbReference>
<dbReference type="RefSeq" id="WP_010999425.1">
    <property type="nucleotide sequence ID" value="NZ_RSCN01000005.1"/>
</dbReference>
<dbReference type="SMR" id="Q8YLJ7"/>
<dbReference type="STRING" id="103690.gene:10497362"/>
<dbReference type="KEGG" id="ana:alr5301"/>
<dbReference type="eggNOG" id="COG0081">
    <property type="taxonomic scope" value="Bacteria"/>
</dbReference>
<dbReference type="OrthoDB" id="9803740at2"/>
<dbReference type="Proteomes" id="UP000002483">
    <property type="component" value="Chromosome"/>
</dbReference>
<dbReference type="GO" id="GO:0015934">
    <property type="term" value="C:large ribosomal subunit"/>
    <property type="evidence" value="ECO:0007669"/>
    <property type="project" value="InterPro"/>
</dbReference>
<dbReference type="GO" id="GO:0019843">
    <property type="term" value="F:rRNA binding"/>
    <property type="evidence" value="ECO:0007669"/>
    <property type="project" value="UniProtKB-UniRule"/>
</dbReference>
<dbReference type="GO" id="GO:0003735">
    <property type="term" value="F:structural constituent of ribosome"/>
    <property type="evidence" value="ECO:0007669"/>
    <property type="project" value="InterPro"/>
</dbReference>
<dbReference type="GO" id="GO:0000049">
    <property type="term" value="F:tRNA binding"/>
    <property type="evidence" value="ECO:0007669"/>
    <property type="project" value="UniProtKB-KW"/>
</dbReference>
<dbReference type="GO" id="GO:0006417">
    <property type="term" value="P:regulation of translation"/>
    <property type="evidence" value="ECO:0007669"/>
    <property type="project" value="UniProtKB-KW"/>
</dbReference>
<dbReference type="GO" id="GO:0006412">
    <property type="term" value="P:translation"/>
    <property type="evidence" value="ECO:0007669"/>
    <property type="project" value="UniProtKB-UniRule"/>
</dbReference>
<dbReference type="CDD" id="cd00403">
    <property type="entry name" value="Ribosomal_L1"/>
    <property type="match status" value="1"/>
</dbReference>
<dbReference type="FunFam" id="3.40.50.790:FF:000001">
    <property type="entry name" value="50S ribosomal protein L1"/>
    <property type="match status" value="1"/>
</dbReference>
<dbReference type="Gene3D" id="3.30.190.20">
    <property type="match status" value="1"/>
</dbReference>
<dbReference type="Gene3D" id="3.40.50.790">
    <property type="match status" value="1"/>
</dbReference>
<dbReference type="HAMAP" id="MF_01318_B">
    <property type="entry name" value="Ribosomal_uL1_B"/>
    <property type="match status" value="1"/>
</dbReference>
<dbReference type="InterPro" id="IPR005878">
    <property type="entry name" value="Ribosom_uL1_bac-type"/>
</dbReference>
<dbReference type="InterPro" id="IPR002143">
    <property type="entry name" value="Ribosomal_uL1"/>
</dbReference>
<dbReference type="InterPro" id="IPR023674">
    <property type="entry name" value="Ribosomal_uL1-like"/>
</dbReference>
<dbReference type="InterPro" id="IPR028364">
    <property type="entry name" value="Ribosomal_uL1/biogenesis"/>
</dbReference>
<dbReference type="InterPro" id="IPR016095">
    <property type="entry name" value="Ribosomal_uL1_3-a/b-sand"/>
</dbReference>
<dbReference type="InterPro" id="IPR023673">
    <property type="entry name" value="Ribosomal_uL1_CS"/>
</dbReference>
<dbReference type="NCBIfam" id="TIGR01169">
    <property type="entry name" value="rplA_bact"/>
    <property type="match status" value="1"/>
</dbReference>
<dbReference type="PANTHER" id="PTHR36427">
    <property type="entry name" value="54S RIBOSOMAL PROTEIN L1, MITOCHONDRIAL"/>
    <property type="match status" value="1"/>
</dbReference>
<dbReference type="PANTHER" id="PTHR36427:SF3">
    <property type="entry name" value="LARGE RIBOSOMAL SUBUNIT PROTEIN UL1M"/>
    <property type="match status" value="1"/>
</dbReference>
<dbReference type="Pfam" id="PF00687">
    <property type="entry name" value="Ribosomal_L1"/>
    <property type="match status" value="1"/>
</dbReference>
<dbReference type="PIRSF" id="PIRSF002155">
    <property type="entry name" value="Ribosomal_L1"/>
    <property type="match status" value="1"/>
</dbReference>
<dbReference type="SUPFAM" id="SSF56808">
    <property type="entry name" value="Ribosomal protein L1"/>
    <property type="match status" value="1"/>
</dbReference>
<dbReference type="PROSITE" id="PS01199">
    <property type="entry name" value="RIBOSOMAL_L1"/>
    <property type="match status" value="1"/>
</dbReference>